<reference key="1">
    <citation type="journal article" date="1997" name="Microbiology">
        <title>Plasmid diversity in Chlamydia.</title>
        <authorList>
            <person name="Thomas N.S."/>
            <person name="Lusher M."/>
            <person name="Storey C.C."/>
            <person name="Clarke I.N."/>
        </authorList>
    </citation>
    <scope>NUCLEOTIDE SEQUENCE [GENOMIC DNA]</scope>
    <source>
        <strain>N352</strain>
    </source>
</reference>
<accession>Q46264</accession>
<accession>Q46256</accession>
<organism>
    <name type="scientific">Chlamydia psittaci</name>
    <name type="common">Chlamydophila psittaci</name>
    <dbReference type="NCBI Taxonomy" id="83554"/>
    <lineage>
        <taxon>Bacteria</taxon>
        <taxon>Pseudomonadati</taxon>
        <taxon>Chlamydiota</taxon>
        <taxon>Chlamydiia</taxon>
        <taxon>Chlamydiales</taxon>
        <taxon>Chlamydiaceae</taxon>
        <taxon>Chlamydia/Chlamydophila group</taxon>
        <taxon>Chlamydia</taxon>
    </lineage>
</organism>
<sequence>MSKLTKEASAFFQKNQENTTKEFLKKEFAMDVFSVSLSDIEKEQIENLVVSQNSKFDEEYNRGLASIKLLTGQIKSIQKQHVLLIGEKIYKVREILKNMNSPDTTFSSWINLVFRTKSSAYNALGYYELFISLPDKNTKSLFQSIPYKTAYLLASRKGSVKDKLKVLGKISGLSNALAIDVLNKFLPPLKSSQTERCVDFEEKNKEVSEKLIDILKIVSSGLELSEYNKNLLHQLFEKTLKVDIRC</sequence>
<keyword id="KW-0614">Plasmid</keyword>
<feature type="chain" id="PRO_0000220775" description="Virulence plasmid protein pGP6-D">
    <location>
        <begin position="1"/>
        <end position="246"/>
    </location>
</feature>
<proteinExistence type="inferred from homology"/>
<comment type="similarity">
    <text evidence="1">Belongs to the UPF0137 (pGP6-D) family.</text>
</comment>
<name>GP6D_CHLPS</name>
<dbReference type="EMBL" id="X62475">
    <property type="protein sequence ID" value="CAA44340.1"/>
    <property type="molecule type" value="Genomic_DNA"/>
</dbReference>
<dbReference type="EMBL" id="X62475">
    <property type="protein sequence ID" value="CAA44332.1"/>
    <property type="molecule type" value="Genomic_DNA"/>
</dbReference>
<dbReference type="PIR" id="H39999">
    <property type="entry name" value="H39999"/>
</dbReference>
<dbReference type="RefSeq" id="NP_052323.3">
    <property type="nucleotide sequence ID" value="NC_002117.1"/>
</dbReference>
<dbReference type="RefSeq" id="WP_006343673.1">
    <property type="nucleotide sequence ID" value="NZ_CM004617.1"/>
</dbReference>
<dbReference type="RefSeq" id="WP_010891145.1">
    <property type="nucleotide sequence ID" value="NC_002117.1"/>
</dbReference>
<dbReference type="RefSeq" id="WP_010891149.1">
    <property type="nucleotide sequence ID" value="NC_002117.1"/>
</dbReference>
<dbReference type="RefSeq" id="YP_007391649.1">
    <property type="nucleotide sequence ID" value="NC_002117.1"/>
</dbReference>
<dbReference type="SMR" id="Q46264"/>
<dbReference type="GeneID" id="12242269"/>
<dbReference type="OMA" id="DDECSHG"/>
<dbReference type="OrthoDB" id="19089at2"/>
<dbReference type="InterPro" id="IPR005350">
    <property type="entry name" value="UPF0137"/>
</dbReference>
<dbReference type="Pfam" id="PF03677">
    <property type="entry name" value="UPF0137"/>
    <property type="match status" value="1"/>
</dbReference>
<evidence type="ECO:0000305" key="1"/>
<protein>
    <recommendedName>
        <fullName>Virulence plasmid protein pGP6-D</fullName>
    </recommendedName>
</protein>
<geneLocation type="plasmid">
    <name>pCpA1</name>
</geneLocation>